<protein>
    <recommendedName>
        <fullName evidence="1">ATP-dependent Clp protease adapter protein ClpS</fullName>
    </recommendedName>
</protein>
<keyword id="KW-1185">Reference proteome</keyword>
<evidence type="ECO:0000255" key="1">
    <source>
        <dbReference type="HAMAP-Rule" id="MF_00302"/>
    </source>
</evidence>
<evidence type="ECO:0000305" key="2"/>
<comment type="function">
    <text evidence="1">Involved in the modulation of the specificity of the ClpAP-mediated ATP-dependent protein degradation.</text>
</comment>
<comment type="subunit">
    <text evidence="1">Binds to the N-terminal domain of the chaperone ClpA.</text>
</comment>
<comment type="similarity">
    <text evidence="1">Belongs to the ClpS family.</text>
</comment>
<comment type="sequence caution" evidence="2">
    <conflict type="erroneous initiation">
        <sequence resource="EMBL-CDS" id="BAC19220"/>
    </conflict>
</comment>
<name>CLPS_COREF</name>
<accession>Q8FMT9</accession>
<organism>
    <name type="scientific">Corynebacterium efficiens (strain DSM 44549 / YS-314 / AJ 12310 / JCM 11189 / NBRC 100395)</name>
    <dbReference type="NCBI Taxonomy" id="196164"/>
    <lineage>
        <taxon>Bacteria</taxon>
        <taxon>Bacillati</taxon>
        <taxon>Actinomycetota</taxon>
        <taxon>Actinomycetes</taxon>
        <taxon>Mycobacteriales</taxon>
        <taxon>Corynebacteriaceae</taxon>
        <taxon>Corynebacterium</taxon>
    </lineage>
</organism>
<sequence length="101" mass="11158">MCSSPSAPTAEPDVEMDVHTVSSENLPWLCIVWDDPVNLMSYVTYVFQTVLGYSRKRANELMMQVHTEGKAVVSSGEKDKVEGDVKKLHVAGLWATMQQAG</sequence>
<feature type="chain" id="PRO_0000215702" description="ATP-dependent Clp protease adapter protein ClpS">
    <location>
        <begin position="1"/>
        <end position="101"/>
    </location>
</feature>
<gene>
    <name evidence="1" type="primary">clpS</name>
    <name type="ordered locus">CE2410</name>
</gene>
<proteinExistence type="inferred from homology"/>
<reference key="1">
    <citation type="journal article" date="2003" name="Genome Res.">
        <title>Comparative complete genome sequence analysis of the amino acid replacements responsible for the thermostability of Corynebacterium efficiens.</title>
        <authorList>
            <person name="Nishio Y."/>
            <person name="Nakamura Y."/>
            <person name="Kawarabayasi Y."/>
            <person name="Usuda Y."/>
            <person name="Kimura E."/>
            <person name="Sugimoto S."/>
            <person name="Matsui K."/>
            <person name="Yamagishi A."/>
            <person name="Kikuchi H."/>
            <person name="Ikeo K."/>
            <person name="Gojobori T."/>
        </authorList>
    </citation>
    <scope>NUCLEOTIDE SEQUENCE [LARGE SCALE GENOMIC DNA]</scope>
    <source>
        <strain>DSM 44549 / YS-314 / AJ 12310 / JCM 11189 / NBRC 100395</strain>
    </source>
</reference>
<dbReference type="EMBL" id="BA000035">
    <property type="protein sequence ID" value="BAC19220.1"/>
    <property type="status" value="ALT_INIT"/>
    <property type="molecule type" value="Genomic_DNA"/>
</dbReference>
<dbReference type="SMR" id="Q8FMT9"/>
<dbReference type="STRING" id="196164.gene:10742848"/>
<dbReference type="KEGG" id="cef:CE2410"/>
<dbReference type="eggNOG" id="COG2127">
    <property type="taxonomic scope" value="Bacteria"/>
</dbReference>
<dbReference type="HOGENOM" id="CLU_1452165_0_0_11"/>
<dbReference type="Proteomes" id="UP000001409">
    <property type="component" value="Chromosome"/>
</dbReference>
<dbReference type="GO" id="GO:0030163">
    <property type="term" value="P:protein catabolic process"/>
    <property type="evidence" value="ECO:0007669"/>
    <property type="project" value="InterPro"/>
</dbReference>
<dbReference type="GO" id="GO:0006508">
    <property type="term" value="P:proteolysis"/>
    <property type="evidence" value="ECO:0007669"/>
    <property type="project" value="UniProtKB-UniRule"/>
</dbReference>
<dbReference type="Gene3D" id="3.30.1390.10">
    <property type="match status" value="1"/>
</dbReference>
<dbReference type="HAMAP" id="MF_00302">
    <property type="entry name" value="ClpS"/>
    <property type="match status" value="1"/>
</dbReference>
<dbReference type="InterPro" id="IPR022935">
    <property type="entry name" value="ClpS"/>
</dbReference>
<dbReference type="InterPro" id="IPR003769">
    <property type="entry name" value="ClpS_core"/>
</dbReference>
<dbReference type="InterPro" id="IPR014719">
    <property type="entry name" value="Ribosomal_bL12_C/ClpS-like"/>
</dbReference>
<dbReference type="NCBIfam" id="NF000668">
    <property type="entry name" value="PRK00033.1-1"/>
    <property type="match status" value="1"/>
</dbReference>
<dbReference type="Pfam" id="PF02617">
    <property type="entry name" value="ClpS"/>
    <property type="match status" value="1"/>
</dbReference>
<dbReference type="SUPFAM" id="SSF54736">
    <property type="entry name" value="ClpS-like"/>
    <property type="match status" value="1"/>
</dbReference>